<feature type="chain" id="PRO_0000387945" description="tRNA (guanine-N(7)-)-methyltransferase">
    <location>
        <begin position="1"/>
        <end position="226"/>
    </location>
</feature>
<feature type="binding site" evidence="1">
    <location>
        <position position="59"/>
    </location>
    <ligand>
        <name>S-adenosyl-L-methionine</name>
        <dbReference type="ChEBI" id="CHEBI:59789"/>
    </ligand>
</feature>
<feature type="binding site" evidence="1">
    <location>
        <position position="84"/>
    </location>
    <ligand>
        <name>S-adenosyl-L-methionine</name>
        <dbReference type="ChEBI" id="CHEBI:59789"/>
    </ligand>
</feature>
<feature type="binding site" evidence="1">
    <location>
        <position position="111"/>
    </location>
    <ligand>
        <name>S-adenosyl-L-methionine</name>
        <dbReference type="ChEBI" id="CHEBI:59789"/>
    </ligand>
</feature>
<feature type="binding site" evidence="1">
    <location>
        <position position="169"/>
    </location>
    <ligand>
        <name>substrate</name>
    </ligand>
</feature>
<name>TRMB_CHLT3</name>
<dbReference type="EC" id="2.1.1.33" evidence="1"/>
<dbReference type="EMBL" id="CP001100">
    <property type="protein sequence ID" value="ACF13541.1"/>
    <property type="molecule type" value="Genomic_DNA"/>
</dbReference>
<dbReference type="RefSeq" id="WP_012499625.1">
    <property type="nucleotide sequence ID" value="NC_011026.1"/>
</dbReference>
<dbReference type="SMR" id="B3QY13"/>
<dbReference type="STRING" id="517418.Ctha_1077"/>
<dbReference type="KEGG" id="cts:Ctha_1077"/>
<dbReference type="eggNOG" id="COG0220">
    <property type="taxonomic scope" value="Bacteria"/>
</dbReference>
<dbReference type="HOGENOM" id="CLU_050910_2_0_10"/>
<dbReference type="OrthoDB" id="9802090at2"/>
<dbReference type="UniPathway" id="UPA00989"/>
<dbReference type="Proteomes" id="UP000001208">
    <property type="component" value="Chromosome"/>
</dbReference>
<dbReference type="GO" id="GO:0043527">
    <property type="term" value="C:tRNA methyltransferase complex"/>
    <property type="evidence" value="ECO:0007669"/>
    <property type="project" value="TreeGrafter"/>
</dbReference>
<dbReference type="GO" id="GO:0008176">
    <property type="term" value="F:tRNA (guanine(46)-N7)-methyltransferase activity"/>
    <property type="evidence" value="ECO:0007669"/>
    <property type="project" value="UniProtKB-UniRule"/>
</dbReference>
<dbReference type="CDD" id="cd02440">
    <property type="entry name" value="AdoMet_MTases"/>
    <property type="match status" value="1"/>
</dbReference>
<dbReference type="Gene3D" id="3.40.50.150">
    <property type="entry name" value="Vaccinia Virus protein VP39"/>
    <property type="match status" value="1"/>
</dbReference>
<dbReference type="HAMAP" id="MF_01057">
    <property type="entry name" value="tRNA_methyltr_TrmB"/>
    <property type="match status" value="1"/>
</dbReference>
<dbReference type="InterPro" id="IPR029063">
    <property type="entry name" value="SAM-dependent_MTases_sf"/>
</dbReference>
<dbReference type="InterPro" id="IPR003358">
    <property type="entry name" value="tRNA_(Gua-N-7)_MeTrfase_Trmb"/>
</dbReference>
<dbReference type="InterPro" id="IPR055361">
    <property type="entry name" value="tRNA_methyltr_TrmB_bact"/>
</dbReference>
<dbReference type="NCBIfam" id="TIGR00091">
    <property type="entry name" value="tRNA (guanosine(46)-N7)-methyltransferase TrmB"/>
    <property type="match status" value="1"/>
</dbReference>
<dbReference type="PANTHER" id="PTHR23417">
    <property type="entry name" value="3-DEOXY-D-MANNO-OCTULOSONIC-ACID TRANSFERASE/TRNA GUANINE-N 7 - -METHYLTRANSFERASE"/>
    <property type="match status" value="1"/>
</dbReference>
<dbReference type="PANTHER" id="PTHR23417:SF14">
    <property type="entry name" value="PENTACOTRIPEPTIDE-REPEAT REGION OF PRORP DOMAIN-CONTAINING PROTEIN"/>
    <property type="match status" value="1"/>
</dbReference>
<dbReference type="Pfam" id="PF02390">
    <property type="entry name" value="Methyltransf_4"/>
    <property type="match status" value="1"/>
</dbReference>
<dbReference type="SUPFAM" id="SSF53335">
    <property type="entry name" value="S-adenosyl-L-methionine-dependent methyltransferases"/>
    <property type="match status" value="1"/>
</dbReference>
<dbReference type="PROSITE" id="PS51625">
    <property type="entry name" value="SAM_MT_TRMB"/>
    <property type="match status" value="1"/>
</dbReference>
<comment type="function">
    <text evidence="1">Catalyzes the formation of N(7)-methylguanine at position 46 (m7G46) in tRNA.</text>
</comment>
<comment type="catalytic activity">
    <reaction evidence="1">
        <text>guanosine(46) in tRNA + S-adenosyl-L-methionine = N(7)-methylguanosine(46) in tRNA + S-adenosyl-L-homocysteine</text>
        <dbReference type="Rhea" id="RHEA:42708"/>
        <dbReference type="Rhea" id="RHEA-COMP:10188"/>
        <dbReference type="Rhea" id="RHEA-COMP:10189"/>
        <dbReference type="ChEBI" id="CHEBI:57856"/>
        <dbReference type="ChEBI" id="CHEBI:59789"/>
        <dbReference type="ChEBI" id="CHEBI:74269"/>
        <dbReference type="ChEBI" id="CHEBI:74480"/>
        <dbReference type="EC" id="2.1.1.33"/>
    </reaction>
</comment>
<comment type="pathway">
    <text evidence="1">tRNA modification; N(7)-methylguanine-tRNA biosynthesis.</text>
</comment>
<comment type="similarity">
    <text evidence="1">Belongs to the class I-like SAM-binding methyltransferase superfamily. TrmB family.</text>
</comment>
<protein>
    <recommendedName>
        <fullName evidence="1">tRNA (guanine-N(7)-)-methyltransferase</fullName>
        <ecNumber evidence="1">2.1.1.33</ecNumber>
    </recommendedName>
    <alternativeName>
        <fullName evidence="1">tRNA (guanine(46)-N(7))-methyltransferase</fullName>
    </alternativeName>
    <alternativeName>
        <fullName evidence="1">tRNA(m7G46)-methyltransferase</fullName>
    </alternativeName>
</protein>
<accession>B3QY13</accession>
<evidence type="ECO:0000255" key="1">
    <source>
        <dbReference type="HAMAP-Rule" id="MF_01057"/>
    </source>
</evidence>
<keyword id="KW-0489">Methyltransferase</keyword>
<keyword id="KW-1185">Reference proteome</keyword>
<keyword id="KW-0949">S-adenosyl-L-methionine</keyword>
<keyword id="KW-0808">Transferase</keyword>
<keyword id="KW-0819">tRNA processing</keyword>
<organism>
    <name type="scientific">Chloroherpeton thalassium (strain ATCC 35110 / GB-78)</name>
    <dbReference type="NCBI Taxonomy" id="517418"/>
    <lineage>
        <taxon>Bacteria</taxon>
        <taxon>Pseudomonadati</taxon>
        <taxon>Chlorobiota</taxon>
        <taxon>Chlorobiia</taxon>
        <taxon>Chlorobiales</taxon>
        <taxon>Chloroherpetonaceae</taxon>
        <taxon>Chloroherpeton</taxon>
    </lineage>
</organism>
<proteinExistence type="inferred from homology"/>
<gene>
    <name evidence="1" type="primary">trmB</name>
    <name type="ordered locus">Ctha_1077</name>
</gene>
<reference key="1">
    <citation type="submission" date="2008-06" db="EMBL/GenBank/DDBJ databases">
        <title>Complete sequence of Chloroherpeton thalassium ATCC 35110.</title>
        <authorList>
            <consortium name="US DOE Joint Genome Institute"/>
            <person name="Lucas S."/>
            <person name="Copeland A."/>
            <person name="Lapidus A."/>
            <person name="Glavina del Rio T."/>
            <person name="Dalin E."/>
            <person name="Tice H."/>
            <person name="Bruce D."/>
            <person name="Goodwin L."/>
            <person name="Pitluck S."/>
            <person name="Schmutz J."/>
            <person name="Larimer F."/>
            <person name="Land M."/>
            <person name="Hauser L."/>
            <person name="Kyrpides N."/>
            <person name="Mikhailova N."/>
            <person name="Liu Z."/>
            <person name="Li T."/>
            <person name="Zhao F."/>
            <person name="Overmann J."/>
            <person name="Bryant D.A."/>
            <person name="Richardson P."/>
        </authorList>
    </citation>
    <scope>NUCLEOTIDE SEQUENCE [LARGE SCALE GENOMIC DNA]</scope>
    <source>
        <strain>ATCC 35110 / GB-78</strain>
    </source>
</reference>
<sequence>MGKGRGRHPSRLKVKPPEPEILAKYLHHWNTKELYHHPDTFLQVSSPSFFQNENPLEIDIGCATGDLVCSLAQKNPQVNFIGVEVSMKPLYRAIKYSVREQIENVRFIKTDFRLLYPLLPDASVQKIFFHFPVPVVRAKDSKYLIFSEDFLSEMHRALQVGGMISVISDSAEYFPIMRELGQNDTRYELISDEAKCMALEPDEKSYYHKYWDAQGREKFRFILVKK</sequence>